<feature type="chain" id="PRO_0000155677" description="Putative manganese efflux pump MntP">
    <location>
        <begin position="1"/>
        <end position="186"/>
    </location>
</feature>
<feature type="transmembrane region" description="Helical" evidence="1">
    <location>
        <begin position="1"/>
        <end position="21"/>
    </location>
</feature>
<feature type="transmembrane region" description="Helical" evidence="1">
    <location>
        <begin position="39"/>
        <end position="59"/>
    </location>
</feature>
<feature type="transmembrane region" description="Helical" evidence="1">
    <location>
        <begin position="61"/>
        <end position="81"/>
    </location>
</feature>
<feature type="transmembrane region" description="Helical" evidence="1">
    <location>
        <begin position="102"/>
        <end position="122"/>
    </location>
</feature>
<feature type="transmembrane region" description="Helical" evidence="1">
    <location>
        <begin position="134"/>
        <end position="156"/>
    </location>
</feature>
<feature type="transmembrane region" description="Helical" evidence="1">
    <location>
        <begin position="165"/>
        <end position="185"/>
    </location>
</feature>
<reference key="1">
    <citation type="journal article" date="2002" name="Genome Res.">
        <title>The genome of Methanosarcina acetivorans reveals extensive metabolic and physiological diversity.</title>
        <authorList>
            <person name="Galagan J.E."/>
            <person name="Nusbaum C."/>
            <person name="Roy A."/>
            <person name="Endrizzi M.G."/>
            <person name="Macdonald P."/>
            <person name="FitzHugh W."/>
            <person name="Calvo S."/>
            <person name="Engels R."/>
            <person name="Smirnov S."/>
            <person name="Atnoor D."/>
            <person name="Brown A."/>
            <person name="Allen N."/>
            <person name="Naylor J."/>
            <person name="Stange-Thomann N."/>
            <person name="DeArellano K."/>
            <person name="Johnson R."/>
            <person name="Linton L."/>
            <person name="McEwan P."/>
            <person name="McKernan K."/>
            <person name="Talamas J."/>
            <person name="Tirrell A."/>
            <person name="Ye W."/>
            <person name="Zimmer A."/>
            <person name="Barber R.D."/>
            <person name="Cann I."/>
            <person name="Graham D.E."/>
            <person name="Grahame D.A."/>
            <person name="Guss A.M."/>
            <person name="Hedderich R."/>
            <person name="Ingram-Smith C."/>
            <person name="Kuettner H.C."/>
            <person name="Krzycki J.A."/>
            <person name="Leigh J.A."/>
            <person name="Li W."/>
            <person name="Liu J."/>
            <person name="Mukhopadhyay B."/>
            <person name="Reeve J.N."/>
            <person name="Smith K."/>
            <person name="Springer T.A."/>
            <person name="Umayam L.A."/>
            <person name="White O."/>
            <person name="White R.H."/>
            <person name="de Macario E.C."/>
            <person name="Ferry J.G."/>
            <person name="Jarrell K.F."/>
            <person name="Jing H."/>
            <person name="Macario A.J.L."/>
            <person name="Paulsen I.T."/>
            <person name="Pritchett M."/>
            <person name="Sowers K.R."/>
            <person name="Swanson R.V."/>
            <person name="Zinder S.H."/>
            <person name="Lander E."/>
            <person name="Metcalf W.W."/>
            <person name="Birren B."/>
        </authorList>
    </citation>
    <scope>NUCLEOTIDE SEQUENCE [LARGE SCALE GENOMIC DNA]</scope>
    <source>
        <strain>ATCC 35395 / DSM 2834 / JCM 12185 / C2A</strain>
    </source>
</reference>
<proteinExistence type="inferred from homology"/>
<name>MNTP_METAC</name>
<accession>Q8TJN1</accession>
<gene>
    <name evidence="1" type="primary">mntP</name>
    <name type="ordered locus">MA_3749</name>
</gene>
<protein>
    <recommendedName>
        <fullName evidence="1">Putative manganese efflux pump MntP</fullName>
    </recommendedName>
</protein>
<organism>
    <name type="scientific">Methanosarcina acetivorans (strain ATCC 35395 / DSM 2834 / JCM 12185 / C2A)</name>
    <dbReference type="NCBI Taxonomy" id="188937"/>
    <lineage>
        <taxon>Archaea</taxon>
        <taxon>Methanobacteriati</taxon>
        <taxon>Methanobacteriota</taxon>
        <taxon>Stenosarchaea group</taxon>
        <taxon>Methanomicrobia</taxon>
        <taxon>Methanosarcinales</taxon>
        <taxon>Methanosarcinaceae</taxon>
        <taxon>Methanosarcina</taxon>
    </lineage>
</organism>
<keyword id="KW-1003">Cell membrane</keyword>
<keyword id="KW-0406">Ion transport</keyword>
<keyword id="KW-0464">Manganese</keyword>
<keyword id="KW-0472">Membrane</keyword>
<keyword id="KW-1185">Reference proteome</keyword>
<keyword id="KW-0812">Transmembrane</keyword>
<keyword id="KW-1133">Transmembrane helix</keyword>
<keyword id="KW-0813">Transport</keyword>
<comment type="function">
    <text evidence="1">Probably functions as a manganese efflux pump.</text>
</comment>
<comment type="subcellular location">
    <subcellularLocation>
        <location evidence="1">Cell membrane</location>
        <topology evidence="1">Multi-pass membrane protein</topology>
    </subcellularLocation>
</comment>
<comment type="similarity">
    <text evidence="1">Belongs to the MntP (TC 9.B.29) family.</text>
</comment>
<dbReference type="EMBL" id="AE010299">
    <property type="protein sequence ID" value="AAM07102.1"/>
    <property type="molecule type" value="Genomic_DNA"/>
</dbReference>
<dbReference type="RefSeq" id="WP_011023653.1">
    <property type="nucleotide sequence ID" value="NC_003552.1"/>
</dbReference>
<dbReference type="SMR" id="Q8TJN1"/>
<dbReference type="STRING" id="188937.MA_3749"/>
<dbReference type="EnsemblBacteria" id="AAM07102">
    <property type="protein sequence ID" value="AAM07102"/>
    <property type="gene ID" value="MA_3749"/>
</dbReference>
<dbReference type="GeneID" id="1475643"/>
<dbReference type="KEGG" id="mac:MA_3749"/>
<dbReference type="HOGENOM" id="CLU_096410_3_0_2"/>
<dbReference type="InParanoid" id="Q8TJN1"/>
<dbReference type="OrthoDB" id="53356at2157"/>
<dbReference type="PhylomeDB" id="Q8TJN1"/>
<dbReference type="Proteomes" id="UP000002487">
    <property type="component" value="Chromosome"/>
</dbReference>
<dbReference type="GO" id="GO:0005886">
    <property type="term" value="C:plasma membrane"/>
    <property type="evidence" value="ECO:0000318"/>
    <property type="project" value="GO_Central"/>
</dbReference>
<dbReference type="GO" id="GO:0005384">
    <property type="term" value="F:manganese ion transmembrane transporter activity"/>
    <property type="evidence" value="ECO:0000318"/>
    <property type="project" value="GO_Central"/>
</dbReference>
<dbReference type="GO" id="GO:0030026">
    <property type="term" value="P:intracellular manganese ion homeostasis"/>
    <property type="evidence" value="ECO:0000318"/>
    <property type="project" value="GO_Central"/>
</dbReference>
<dbReference type="GO" id="GO:0140048">
    <property type="term" value="P:manganese ion export across plasma membrane"/>
    <property type="evidence" value="ECO:0000318"/>
    <property type="project" value="GO_Central"/>
</dbReference>
<dbReference type="HAMAP" id="MF_01521">
    <property type="entry name" value="MntP_pump"/>
    <property type="match status" value="1"/>
</dbReference>
<dbReference type="InterPro" id="IPR003810">
    <property type="entry name" value="Mntp/YtaF"/>
</dbReference>
<dbReference type="InterPro" id="IPR022929">
    <property type="entry name" value="Put_MntP"/>
</dbReference>
<dbReference type="PANTHER" id="PTHR35529">
    <property type="entry name" value="MANGANESE EFFLUX PUMP MNTP-RELATED"/>
    <property type="match status" value="1"/>
</dbReference>
<dbReference type="PANTHER" id="PTHR35529:SF1">
    <property type="entry name" value="MANGANESE EFFLUX PUMP MNTP-RELATED"/>
    <property type="match status" value="1"/>
</dbReference>
<dbReference type="Pfam" id="PF02659">
    <property type="entry name" value="Mntp"/>
    <property type="match status" value="1"/>
</dbReference>
<evidence type="ECO:0000255" key="1">
    <source>
        <dbReference type="HAMAP-Rule" id="MF_01521"/>
    </source>
</evidence>
<sequence length="186" mass="20001">MSFLTNFLLGLGLAMDAFAVSMSSGTTIRPFRVSDALKLAVFFGSFQAMMPVLGWIGGSTVSSFVSDYAPWIAFLLLAFIGCKMIYEALYGDQDGKVNSLNYSVLFLLAVATSIDALAVGMSFAFLGTPILEPVIIIGCVTFVMSFCGAILGYRLGHFFEHEVEILGGLILIGLGGKILAEHMLWI</sequence>